<organism>
    <name type="scientific">Escherichia coli O157:H7</name>
    <dbReference type="NCBI Taxonomy" id="83334"/>
    <lineage>
        <taxon>Bacteria</taxon>
        <taxon>Pseudomonadati</taxon>
        <taxon>Pseudomonadota</taxon>
        <taxon>Gammaproteobacteria</taxon>
        <taxon>Enterobacterales</taxon>
        <taxon>Enterobacteriaceae</taxon>
        <taxon>Escherichia</taxon>
    </lineage>
</organism>
<gene>
    <name evidence="1" type="primary">ruvA</name>
    <name type="ordered locus">Z2913</name>
    <name type="ordered locus">ECs2571</name>
</gene>
<keyword id="KW-0963">Cytoplasm</keyword>
<keyword id="KW-0227">DNA damage</keyword>
<keyword id="KW-0233">DNA recombination</keyword>
<keyword id="KW-0234">DNA repair</keyword>
<keyword id="KW-0238">DNA-binding</keyword>
<keyword id="KW-1185">Reference proteome</keyword>
<keyword id="KW-0742">SOS response</keyword>
<protein>
    <recommendedName>
        <fullName evidence="1">Holliday junction branch migration complex subunit RuvA</fullName>
    </recommendedName>
</protein>
<evidence type="ECO:0000255" key="1">
    <source>
        <dbReference type="HAMAP-Rule" id="MF_00031"/>
    </source>
</evidence>
<feature type="chain" id="PRO_0000094630" description="Holliday junction branch migration complex subunit RuvA">
    <location>
        <begin position="1"/>
        <end position="203"/>
    </location>
</feature>
<feature type="region of interest" description="Domain I" evidence="1">
    <location>
        <begin position="1"/>
        <end position="64"/>
    </location>
</feature>
<feature type="region of interest" description="Domain II" evidence="1">
    <location>
        <begin position="65"/>
        <end position="142"/>
    </location>
</feature>
<feature type="region of interest" description="Flexible linker" evidence="1">
    <location>
        <begin position="143"/>
        <end position="154"/>
    </location>
</feature>
<feature type="region of interest" description="Domain III" evidence="1">
    <location>
        <begin position="155"/>
        <end position="203"/>
    </location>
</feature>
<reference key="1">
    <citation type="journal article" date="2001" name="Nature">
        <title>Genome sequence of enterohaemorrhagic Escherichia coli O157:H7.</title>
        <authorList>
            <person name="Perna N.T."/>
            <person name="Plunkett G. III"/>
            <person name="Burland V."/>
            <person name="Mau B."/>
            <person name="Glasner J.D."/>
            <person name="Rose D.J."/>
            <person name="Mayhew G.F."/>
            <person name="Evans P.S."/>
            <person name="Gregor J."/>
            <person name="Kirkpatrick H.A."/>
            <person name="Posfai G."/>
            <person name="Hackett J."/>
            <person name="Klink S."/>
            <person name="Boutin A."/>
            <person name="Shao Y."/>
            <person name="Miller L."/>
            <person name="Grotbeck E.J."/>
            <person name="Davis N.W."/>
            <person name="Lim A."/>
            <person name="Dimalanta E.T."/>
            <person name="Potamousis K."/>
            <person name="Apodaca J."/>
            <person name="Anantharaman T.S."/>
            <person name="Lin J."/>
            <person name="Yen G."/>
            <person name="Schwartz D.C."/>
            <person name="Welch R.A."/>
            <person name="Blattner F.R."/>
        </authorList>
    </citation>
    <scope>NUCLEOTIDE SEQUENCE [LARGE SCALE GENOMIC DNA]</scope>
    <source>
        <strain>O157:H7 / EDL933 / ATCC 700927 / EHEC</strain>
    </source>
</reference>
<reference key="2">
    <citation type="journal article" date="2001" name="DNA Res.">
        <title>Complete genome sequence of enterohemorrhagic Escherichia coli O157:H7 and genomic comparison with a laboratory strain K-12.</title>
        <authorList>
            <person name="Hayashi T."/>
            <person name="Makino K."/>
            <person name="Ohnishi M."/>
            <person name="Kurokawa K."/>
            <person name="Ishii K."/>
            <person name="Yokoyama K."/>
            <person name="Han C.-G."/>
            <person name="Ohtsubo E."/>
            <person name="Nakayama K."/>
            <person name="Murata T."/>
            <person name="Tanaka M."/>
            <person name="Tobe T."/>
            <person name="Iida T."/>
            <person name="Takami H."/>
            <person name="Honda T."/>
            <person name="Sasakawa C."/>
            <person name="Ogasawara N."/>
            <person name="Yasunaga T."/>
            <person name="Kuhara S."/>
            <person name="Shiba T."/>
            <person name="Hattori M."/>
            <person name="Shinagawa H."/>
        </authorList>
    </citation>
    <scope>NUCLEOTIDE SEQUENCE [LARGE SCALE GENOMIC DNA]</scope>
    <source>
        <strain>O157:H7 / Sakai / RIMD 0509952 / EHEC</strain>
    </source>
</reference>
<comment type="function">
    <text evidence="1">The RuvA-RuvB-RuvC complex processes Holliday junction (HJ) DNA during genetic recombination and DNA repair, while the RuvA-RuvB complex plays an important role in the rescue of blocked DNA replication forks via replication fork reversal (RFR). RuvA specifically binds to HJ cruciform DNA, conferring on it an open structure. The RuvB hexamer acts as an ATP-dependent pump, pulling dsDNA into and through the RuvAB complex. HJ branch migration allows RuvC to scan DNA until it finds its consensus sequence, where it cleaves and resolves the cruciform DNA.</text>
</comment>
<comment type="subunit">
    <text evidence="1">Homotetramer. Forms an RuvA(8)-RuvB(12)-Holliday junction (HJ) complex. HJ DNA is sandwiched between 2 RuvA tetramers; dsDNA enters through RuvA and exits via RuvB. An RuvB hexamer assembles on each DNA strand where it exits the tetramer. Each RuvB hexamer is contacted by two RuvA subunits (via domain III) on 2 adjacent RuvB subunits; this complex drives branch migration. In the full resolvosome a probable DNA-RuvA(4)-RuvB(12)-RuvC(2) complex forms which resolves the HJ.</text>
</comment>
<comment type="subcellular location">
    <subcellularLocation>
        <location evidence="1">Cytoplasm</location>
    </subcellularLocation>
</comment>
<comment type="domain">
    <text evidence="1">Has three domains with a flexible linker between the domains II and III and assumes an 'L' shape. Domain III is highly mobile and contacts RuvB.</text>
</comment>
<comment type="similarity">
    <text evidence="1">Belongs to the RuvA family.</text>
</comment>
<accession>P0A811</accession>
<accession>P08576</accession>
<proteinExistence type="inferred from homology"/>
<name>RUVA_ECO57</name>
<sequence>MIGRLRGIIIEKQPPLVLIEVGGVGYEVHMPMTCFYELPEAGQEAIVFTHFVVREDAQLLYGFNNKQERTLFKELIKTNGVGPKLALAILSGMSAQQFVNAVEREEVGALVKLPGIGKKTAERLIVEMKDRFKGLHGDLFTPAADLVLTSPASPATDDAEQEAVAALVALGYKPQEASRMVSKIARPDASSETLIREALRAAL</sequence>
<dbReference type="EMBL" id="AE005174">
    <property type="protein sequence ID" value="AAG56851.1"/>
    <property type="molecule type" value="Genomic_DNA"/>
</dbReference>
<dbReference type="EMBL" id="BA000007">
    <property type="protein sequence ID" value="BAB35994.1"/>
    <property type="molecule type" value="Genomic_DNA"/>
</dbReference>
<dbReference type="PIR" id="C90950">
    <property type="entry name" value="C90950"/>
</dbReference>
<dbReference type="PIR" id="G85798">
    <property type="entry name" value="G85798"/>
</dbReference>
<dbReference type="RefSeq" id="NP_310598.1">
    <property type="nucleotide sequence ID" value="NC_002695.1"/>
</dbReference>
<dbReference type="RefSeq" id="WP_000580323.1">
    <property type="nucleotide sequence ID" value="NZ_VOAI01000010.1"/>
</dbReference>
<dbReference type="SMR" id="P0A811"/>
<dbReference type="STRING" id="155864.Z2913"/>
<dbReference type="GeneID" id="75057740"/>
<dbReference type="GeneID" id="913515"/>
<dbReference type="KEGG" id="ece:Z2913"/>
<dbReference type="KEGG" id="ecs:ECs_2571"/>
<dbReference type="PATRIC" id="fig|386585.9.peg.2695"/>
<dbReference type="eggNOG" id="COG0632">
    <property type="taxonomic scope" value="Bacteria"/>
</dbReference>
<dbReference type="HOGENOM" id="CLU_087936_0_0_6"/>
<dbReference type="OMA" id="ECAGVGY"/>
<dbReference type="Proteomes" id="UP000000558">
    <property type="component" value="Chromosome"/>
</dbReference>
<dbReference type="Proteomes" id="UP000002519">
    <property type="component" value="Chromosome"/>
</dbReference>
<dbReference type="GO" id="GO:0005737">
    <property type="term" value="C:cytoplasm"/>
    <property type="evidence" value="ECO:0007669"/>
    <property type="project" value="UniProtKB-SubCell"/>
</dbReference>
<dbReference type="GO" id="GO:0009379">
    <property type="term" value="C:Holliday junction helicase complex"/>
    <property type="evidence" value="ECO:0007669"/>
    <property type="project" value="InterPro"/>
</dbReference>
<dbReference type="GO" id="GO:0048476">
    <property type="term" value="C:Holliday junction resolvase complex"/>
    <property type="evidence" value="ECO:0007669"/>
    <property type="project" value="UniProtKB-UniRule"/>
</dbReference>
<dbReference type="GO" id="GO:0005524">
    <property type="term" value="F:ATP binding"/>
    <property type="evidence" value="ECO:0007669"/>
    <property type="project" value="InterPro"/>
</dbReference>
<dbReference type="GO" id="GO:0000400">
    <property type="term" value="F:four-way junction DNA binding"/>
    <property type="evidence" value="ECO:0007669"/>
    <property type="project" value="UniProtKB-UniRule"/>
</dbReference>
<dbReference type="GO" id="GO:0009378">
    <property type="term" value="F:four-way junction helicase activity"/>
    <property type="evidence" value="ECO:0007669"/>
    <property type="project" value="InterPro"/>
</dbReference>
<dbReference type="GO" id="GO:0006310">
    <property type="term" value="P:DNA recombination"/>
    <property type="evidence" value="ECO:0007669"/>
    <property type="project" value="UniProtKB-UniRule"/>
</dbReference>
<dbReference type="GO" id="GO:0006281">
    <property type="term" value="P:DNA repair"/>
    <property type="evidence" value="ECO:0007669"/>
    <property type="project" value="UniProtKB-UniRule"/>
</dbReference>
<dbReference type="GO" id="GO:0009432">
    <property type="term" value="P:SOS response"/>
    <property type="evidence" value="ECO:0007669"/>
    <property type="project" value="UniProtKB-UniRule"/>
</dbReference>
<dbReference type="CDD" id="cd14332">
    <property type="entry name" value="UBA_RuvA_C"/>
    <property type="match status" value="1"/>
</dbReference>
<dbReference type="FunFam" id="1.10.150.20:FF:000012">
    <property type="entry name" value="Holliday junction ATP-dependent DNA helicase RuvA"/>
    <property type="match status" value="1"/>
</dbReference>
<dbReference type="FunFam" id="1.10.8.10:FF:000008">
    <property type="entry name" value="Holliday junction ATP-dependent DNA helicase RuvA"/>
    <property type="match status" value="1"/>
</dbReference>
<dbReference type="FunFam" id="2.40.50.140:FF:000083">
    <property type="entry name" value="Holliday junction ATP-dependent DNA helicase RuvA"/>
    <property type="match status" value="1"/>
</dbReference>
<dbReference type="Gene3D" id="1.10.150.20">
    <property type="entry name" value="5' to 3' exonuclease, C-terminal subdomain"/>
    <property type="match status" value="1"/>
</dbReference>
<dbReference type="Gene3D" id="1.10.8.10">
    <property type="entry name" value="DNA helicase RuvA subunit, C-terminal domain"/>
    <property type="match status" value="1"/>
</dbReference>
<dbReference type="Gene3D" id="2.40.50.140">
    <property type="entry name" value="Nucleic acid-binding proteins"/>
    <property type="match status" value="1"/>
</dbReference>
<dbReference type="HAMAP" id="MF_00031">
    <property type="entry name" value="DNA_HJ_migration_RuvA"/>
    <property type="match status" value="1"/>
</dbReference>
<dbReference type="InterPro" id="IPR013849">
    <property type="entry name" value="DNA_helicase_Holl-junc_RuvA_I"/>
</dbReference>
<dbReference type="InterPro" id="IPR003583">
    <property type="entry name" value="Hlx-hairpin-Hlx_DNA-bd_motif"/>
</dbReference>
<dbReference type="InterPro" id="IPR012340">
    <property type="entry name" value="NA-bd_OB-fold"/>
</dbReference>
<dbReference type="InterPro" id="IPR000085">
    <property type="entry name" value="RuvA"/>
</dbReference>
<dbReference type="InterPro" id="IPR010994">
    <property type="entry name" value="RuvA_2-like"/>
</dbReference>
<dbReference type="InterPro" id="IPR011114">
    <property type="entry name" value="RuvA_C"/>
</dbReference>
<dbReference type="InterPro" id="IPR036267">
    <property type="entry name" value="RuvA_C_sf"/>
</dbReference>
<dbReference type="NCBIfam" id="TIGR00084">
    <property type="entry name" value="ruvA"/>
    <property type="match status" value="1"/>
</dbReference>
<dbReference type="Pfam" id="PF14520">
    <property type="entry name" value="HHH_5"/>
    <property type="match status" value="1"/>
</dbReference>
<dbReference type="Pfam" id="PF07499">
    <property type="entry name" value="RuvA_C"/>
    <property type="match status" value="1"/>
</dbReference>
<dbReference type="Pfam" id="PF01330">
    <property type="entry name" value="RuvA_N"/>
    <property type="match status" value="1"/>
</dbReference>
<dbReference type="SMART" id="SM00278">
    <property type="entry name" value="HhH1"/>
    <property type="match status" value="2"/>
</dbReference>
<dbReference type="SUPFAM" id="SSF46929">
    <property type="entry name" value="DNA helicase RuvA subunit, C-terminal domain"/>
    <property type="match status" value="1"/>
</dbReference>
<dbReference type="SUPFAM" id="SSF50249">
    <property type="entry name" value="Nucleic acid-binding proteins"/>
    <property type="match status" value="1"/>
</dbReference>
<dbReference type="SUPFAM" id="SSF47781">
    <property type="entry name" value="RuvA domain 2-like"/>
    <property type="match status" value="1"/>
</dbReference>